<evidence type="ECO:0000255" key="1">
    <source>
        <dbReference type="HAMAP-Rule" id="MF_00639"/>
    </source>
</evidence>
<gene>
    <name evidence="1" type="primary">murD</name>
    <name type="ordered locus">Exig_1962</name>
</gene>
<protein>
    <recommendedName>
        <fullName evidence="1">UDP-N-acetylmuramoylalanine--D-glutamate ligase</fullName>
        <ecNumber evidence="1">6.3.2.9</ecNumber>
    </recommendedName>
    <alternativeName>
        <fullName evidence="1">D-glutamic acid-adding enzyme</fullName>
    </alternativeName>
    <alternativeName>
        <fullName evidence="1">UDP-N-acetylmuramoyl-L-alanyl-D-glutamate synthetase</fullName>
    </alternativeName>
</protein>
<accession>B1YIT8</accession>
<comment type="function">
    <text evidence="1">Cell wall formation. Catalyzes the addition of glutamate to the nucleotide precursor UDP-N-acetylmuramoyl-L-alanine (UMA).</text>
</comment>
<comment type="catalytic activity">
    <reaction evidence="1">
        <text>UDP-N-acetyl-alpha-D-muramoyl-L-alanine + D-glutamate + ATP = UDP-N-acetyl-alpha-D-muramoyl-L-alanyl-D-glutamate + ADP + phosphate + H(+)</text>
        <dbReference type="Rhea" id="RHEA:16429"/>
        <dbReference type="ChEBI" id="CHEBI:15378"/>
        <dbReference type="ChEBI" id="CHEBI:29986"/>
        <dbReference type="ChEBI" id="CHEBI:30616"/>
        <dbReference type="ChEBI" id="CHEBI:43474"/>
        <dbReference type="ChEBI" id="CHEBI:83898"/>
        <dbReference type="ChEBI" id="CHEBI:83900"/>
        <dbReference type="ChEBI" id="CHEBI:456216"/>
        <dbReference type="EC" id="6.3.2.9"/>
    </reaction>
</comment>
<comment type="pathway">
    <text evidence="1">Cell wall biogenesis; peptidoglycan biosynthesis.</text>
</comment>
<comment type="subcellular location">
    <subcellularLocation>
        <location evidence="1">Cytoplasm</location>
    </subcellularLocation>
</comment>
<comment type="similarity">
    <text evidence="1">Belongs to the MurCDEF family.</text>
</comment>
<reference key="1">
    <citation type="submission" date="2008-04" db="EMBL/GenBank/DDBJ databases">
        <title>Complete sequence of chromosome of Exiguobacterium sibiricum 255-15.</title>
        <authorList>
            <consortium name="US DOE Joint Genome Institute"/>
            <person name="Copeland A."/>
            <person name="Lucas S."/>
            <person name="Lapidus A."/>
            <person name="Glavina del Rio T."/>
            <person name="Dalin E."/>
            <person name="Tice H."/>
            <person name="Bruce D."/>
            <person name="Goodwin L."/>
            <person name="Pitluck S."/>
            <person name="Kiss H."/>
            <person name="Chertkov O."/>
            <person name="Monk C."/>
            <person name="Brettin T."/>
            <person name="Detter J.C."/>
            <person name="Han C."/>
            <person name="Kuske C.R."/>
            <person name="Schmutz J."/>
            <person name="Larimer F."/>
            <person name="Land M."/>
            <person name="Hauser L."/>
            <person name="Kyrpides N."/>
            <person name="Mikhailova N."/>
            <person name="Vishnivetskaya T."/>
            <person name="Rodrigues D.F."/>
            <person name="Gilichinsky D."/>
            <person name="Tiedje J."/>
            <person name="Richardson P."/>
        </authorList>
    </citation>
    <scope>NUCLEOTIDE SEQUENCE [LARGE SCALE GENOMIC DNA]</scope>
    <source>
        <strain>DSM 17290 / CCUG 55495 / CIP 109462 / JCM 13490 / 255-15</strain>
    </source>
</reference>
<sequence>MMKSSELEKKKVLVLGTAKSGIAAATYLVKAGAVVTVNDGGTPSENDVQTLESLKVETLFGSHPLSLLDGTDLIVKNPGIPYQIPLLQKALELGIPVWTEVELAYRSTKADWVAITGSNGKTTTTTLVHELLKRGSKRVHLAGNIGFPAVEVAQQAEAGDVIVIELSSFQLMGIESFCPVSAAFLNLSPAHLDYHGDVTSYAAAKARIFSNMDEAGRLVVNADDEEVMRLSETAAAERLTFSRRQDAYAHIENDMIFVGQTEILPVRELALGGGHNLENVLAALTLIEPFGISLTAIQDVLRTFGGVAHRTEYIGEFAGRKVYNDSKATNNVATEAALSGFQSPIIWICGGLERGADLTPLKSAMTHVKHVIGLGETGQRFADLATEQQIASTVTREMEEAVATAFDVSKPGDIILLSPASASWDQYKTYEERGEHFIRSVQKVGGMMK</sequence>
<proteinExistence type="inferred from homology"/>
<feature type="chain" id="PRO_1000130855" description="UDP-N-acetylmuramoylalanine--D-glutamate ligase">
    <location>
        <begin position="1"/>
        <end position="449"/>
    </location>
</feature>
<feature type="binding site" evidence="1">
    <location>
        <begin position="117"/>
        <end position="123"/>
    </location>
    <ligand>
        <name>ATP</name>
        <dbReference type="ChEBI" id="CHEBI:30616"/>
    </ligand>
</feature>
<keyword id="KW-0067">ATP-binding</keyword>
<keyword id="KW-0131">Cell cycle</keyword>
<keyword id="KW-0132">Cell division</keyword>
<keyword id="KW-0133">Cell shape</keyword>
<keyword id="KW-0961">Cell wall biogenesis/degradation</keyword>
<keyword id="KW-0963">Cytoplasm</keyword>
<keyword id="KW-0436">Ligase</keyword>
<keyword id="KW-0547">Nucleotide-binding</keyword>
<keyword id="KW-0573">Peptidoglycan synthesis</keyword>
<keyword id="KW-1185">Reference proteome</keyword>
<organism>
    <name type="scientific">Exiguobacterium sibiricum (strain DSM 17290 / CCUG 55495 / CIP 109462 / JCM 13490 / 255-15)</name>
    <dbReference type="NCBI Taxonomy" id="262543"/>
    <lineage>
        <taxon>Bacteria</taxon>
        <taxon>Bacillati</taxon>
        <taxon>Bacillota</taxon>
        <taxon>Bacilli</taxon>
        <taxon>Bacillales</taxon>
        <taxon>Bacillales Family XII. Incertae Sedis</taxon>
        <taxon>Exiguobacterium</taxon>
    </lineage>
</organism>
<dbReference type="EC" id="6.3.2.9" evidence="1"/>
<dbReference type="EMBL" id="CP001022">
    <property type="protein sequence ID" value="ACB61414.1"/>
    <property type="molecule type" value="Genomic_DNA"/>
</dbReference>
<dbReference type="RefSeq" id="WP_012370832.1">
    <property type="nucleotide sequence ID" value="NC_010556.1"/>
</dbReference>
<dbReference type="SMR" id="B1YIT8"/>
<dbReference type="STRING" id="262543.Exig_1962"/>
<dbReference type="KEGG" id="esi:Exig_1962"/>
<dbReference type="eggNOG" id="COG0771">
    <property type="taxonomic scope" value="Bacteria"/>
</dbReference>
<dbReference type="HOGENOM" id="CLU_032540_0_1_9"/>
<dbReference type="OrthoDB" id="9809796at2"/>
<dbReference type="UniPathway" id="UPA00219"/>
<dbReference type="Proteomes" id="UP000001681">
    <property type="component" value="Chromosome"/>
</dbReference>
<dbReference type="GO" id="GO:0005737">
    <property type="term" value="C:cytoplasm"/>
    <property type="evidence" value="ECO:0007669"/>
    <property type="project" value="UniProtKB-SubCell"/>
</dbReference>
<dbReference type="GO" id="GO:0005524">
    <property type="term" value="F:ATP binding"/>
    <property type="evidence" value="ECO:0007669"/>
    <property type="project" value="UniProtKB-UniRule"/>
</dbReference>
<dbReference type="GO" id="GO:0008764">
    <property type="term" value="F:UDP-N-acetylmuramoylalanine-D-glutamate ligase activity"/>
    <property type="evidence" value="ECO:0007669"/>
    <property type="project" value="UniProtKB-UniRule"/>
</dbReference>
<dbReference type="GO" id="GO:0051301">
    <property type="term" value="P:cell division"/>
    <property type="evidence" value="ECO:0007669"/>
    <property type="project" value="UniProtKB-KW"/>
</dbReference>
<dbReference type="GO" id="GO:0071555">
    <property type="term" value="P:cell wall organization"/>
    <property type="evidence" value="ECO:0007669"/>
    <property type="project" value="UniProtKB-KW"/>
</dbReference>
<dbReference type="GO" id="GO:0009252">
    <property type="term" value="P:peptidoglycan biosynthetic process"/>
    <property type="evidence" value="ECO:0007669"/>
    <property type="project" value="UniProtKB-UniRule"/>
</dbReference>
<dbReference type="GO" id="GO:0008360">
    <property type="term" value="P:regulation of cell shape"/>
    <property type="evidence" value="ECO:0007669"/>
    <property type="project" value="UniProtKB-KW"/>
</dbReference>
<dbReference type="Gene3D" id="3.90.190.20">
    <property type="entry name" value="Mur ligase, C-terminal domain"/>
    <property type="match status" value="1"/>
</dbReference>
<dbReference type="Gene3D" id="3.40.1190.10">
    <property type="entry name" value="Mur-like, catalytic domain"/>
    <property type="match status" value="1"/>
</dbReference>
<dbReference type="Gene3D" id="3.40.50.720">
    <property type="entry name" value="NAD(P)-binding Rossmann-like Domain"/>
    <property type="match status" value="1"/>
</dbReference>
<dbReference type="HAMAP" id="MF_00639">
    <property type="entry name" value="MurD"/>
    <property type="match status" value="1"/>
</dbReference>
<dbReference type="InterPro" id="IPR036565">
    <property type="entry name" value="Mur-like_cat_sf"/>
</dbReference>
<dbReference type="InterPro" id="IPR004101">
    <property type="entry name" value="Mur_ligase_C"/>
</dbReference>
<dbReference type="InterPro" id="IPR036615">
    <property type="entry name" value="Mur_ligase_C_dom_sf"/>
</dbReference>
<dbReference type="InterPro" id="IPR013221">
    <property type="entry name" value="Mur_ligase_cen"/>
</dbReference>
<dbReference type="InterPro" id="IPR005762">
    <property type="entry name" value="MurD"/>
</dbReference>
<dbReference type="NCBIfam" id="TIGR01087">
    <property type="entry name" value="murD"/>
    <property type="match status" value="1"/>
</dbReference>
<dbReference type="PANTHER" id="PTHR43692">
    <property type="entry name" value="UDP-N-ACETYLMURAMOYLALANINE--D-GLUTAMATE LIGASE"/>
    <property type="match status" value="1"/>
</dbReference>
<dbReference type="PANTHER" id="PTHR43692:SF1">
    <property type="entry name" value="UDP-N-ACETYLMURAMOYLALANINE--D-GLUTAMATE LIGASE"/>
    <property type="match status" value="1"/>
</dbReference>
<dbReference type="Pfam" id="PF02875">
    <property type="entry name" value="Mur_ligase_C"/>
    <property type="match status" value="1"/>
</dbReference>
<dbReference type="Pfam" id="PF08245">
    <property type="entry name" value="Mur_ligase_M"/>
    <property type="match status" value="1"/>
</dbReference>
<dbReference type="Pfam" id="PF21799">
    <property type="entry name" value="MurD-like_N"/>
    <property type="match status" value="1"/>
</dbReference>
<dbReference type="SUPFAM" id="SSF51984">
    <property type="entry name" value="MurCD N-terminal domain"/>
    <property type="match status" value="1"/>
</dbReference>
<dbReference type="SUPFAM" id="SSF53623">
    <property type="entry name" value="MurD-like peptide ligases, catalytic domain"/>
    <property type="match status" value="1"/>
</dbReference>
<dbReference type="SUPFAM" id="SSF53244">
    <property type="entry name" value="MurD-like peptide ligases, peptide-binding domain"/>
    <property type="match status" value="1"/>
</dbReference>
<name>MURD_EXIS2</name>